<protein>
    <recommendedName>
        <fullName>Receptor homology region, transmembrane domain- and RING domain-containing protein 1</fullName>
        <shortName>OsRMR1</shortName>
    </recommendedName>
</protein>
<organism>
    <name type="scientific">Oryza sativa subsp. japonica</name>
    <name type="common">Rice</name>
    <dbReference type="NCBI Taxonomy" id="39947"/>
    <lineage>
        <taxon>Eukaryota</taxon>
        <taxon>Viridiplantae</taxon>
        <taxon>Streptophyta</taxon>
        <taxon>Embryophyta</taxon>
        <taxon>Tracheophyta</taxon>
        <taxon>Spermatophyta</taxon>
        <taxon>Magnoliopsida</taxon>
        <taxon>Liliopsida</taxon>
        <taxon>Poales</taxon>
        <taxon>Poaceae</taxon>
        <taxon>BOP clade</taxon>
        <taxon>Oryzoideae</taxon>
        <taxon>Oryzeae</taxon>
        <taxon>Oryzinae</taxon>
        <taxon>Oryza</taxon>
        <taxon>Oryza sativa</taxon>
    </lineage>
</organism>
<gene>
    <name type="ordered locus">Os03g0167500</name>
    <name type="ordered locus">LOC_Os03g07130</name>
    <name type="ORF">OSJNBa0091P11.36</name>
</gene>
<name>RMR1_ORYSJ</name>
<comment type="function">
    <text evidence="4">Involved in the trafficking of vacuolar proteins. Functions probably as a sorting receptor for protein trafficking to the protein storage vacuole (PSV) by binding the C-terminal vacuolar sorting determinant (VSD) of vacuolar-sorted proteins.</text>
</comment>
<comment type="subcellular location">
    <subcellularLocation>
        <location evidence="4">Prevacuolar compartment membrane</location>
    </subcellularLocation>
    <subcellularLocation>
        <location evidence="4">Protein storage vacuole membrane</location>
    </subcellularLocation>
    <subcellularLocation>
        <location evidence="7">Golgi apparatus membrane</location>
        <topology evidence="7">Single-pass type I membrane protein</topology>
    </subcellularLocation>
</comment>
<comment type="alternative products">
    <event type="alternative splicing"/>
    <isoform>
        <id>Q10R93-1</id>
        <name>1</name>
        <sequence type="displayed"/>
    </isoform>
    <isoform>
        <id>Q10R93-2</id>
        <name>2</name>
        <sequence type="described" ref="VSP_053580"/>
    </isoform>
</comment>
<comment type="sequence caution" evidence="6">
    <conflict type="erroneous gene model prediction">
        <sequence resource="EMBL-CDS" id="AAL84300"/>
    </conflict>
</comment>
<proteinExistence type="evidence at transcript level"/>
<reference key="1">
    <citation type="journal article" date="2005" name="Genome Res.">
        <title>Sequence, annotation, and analysis of synteny between rice chromosome 3 and diverged grass species.</title>
        <authorList>
            <consortium name="The rice chromosome 3 sequencing consortium"/>
            <person name="Buell C.R."/>
            <person name="Yuan Q."/>
            <person name="Ouyang S."/>
            <person name="Liu J."/>
            <person name="Zhu W."/>
            <person name="Wang A."/>
            <person name="Maiti R."/>
            <person name="Haas B."/>
            <person name="Wortman J."/>
            <person name="Pertea M."/>
            <person name="Jones K.M."/>
            <person name="Kim M."/>
            <person name="Overton L."/>
            <person name="Tsitrin T."/>
            <person name="Fadrosh D."/>
            <person name="Bera J."/>
            <person name="Weaver B."/>
            <person name="Jin S."/>
            <person name="Johri S."/>
            <person name="Reardon M."/>
            <person name="Webb K."/>
            <person name="Hill J."/>
            <person name="Moffat K."/>
            <person name="Tallon L."/>
            <person name="Van Aken S."/>
            <person name="Lewis M."/>
            <person name="Utterback T."/>
            <person name="Feldblyum T."/>
            <person name="Zismann V."/>
            <person name="Iobst S."/>
            <person name="Hsiao J."/>
            <person name="de Vazeille A.R."/>
            <person name="Salzberg S.L."/>
            <person name="White O."/>
            <person name="Fraser C.M."/>
            <person name="Yu Y."/>
            <person name="Kim H."/>
            <person name="Rambo T."/>
            <person name="Currie J."/>
            <person name="Collura K."/>
            <person name="Kernodle-Thompson S."/>
            <person name="Wei F."/>
            <person name="Kudrna K."/>
            <person name="Ammiraju J.S.S."/>
            <person name="Luo M."/>
            <person name="Goicoechea J.L."/>
            <person name="Wing R.A."/>
            <person name="Henry D."/>
            <person name="Oates R."/>
            <person name="Palmer M."/>
            <person name="Pries G."/>
            <person name="Saski C."/>
            <person name="Simmons J."/>
            <person name="Soderlund C."/>
            <person name="Nelson W."/>
            <person name="de la Bastide M."/>
            <person name="Spiegel L."/>
            <person name="Nascimento L."/>
            <person name="Huang E."/>
            <person name="Preston R."/>
            <person name="Zutavern T."/>
            <person name="Palmer L."/>
            <person name="O'Shaughnessy A."/>
            <person name="Dike S."/>
            <person name="McCombie W.R."/>
            <person name="Minx P."/>
            <person name="Cordum H."/>
            <person name="Wilson R."/>
            <person name="Jin W."/>
            <person name="Lee H.R."/>
            <person name="Jiang J."/>
            <person name="Jackson S."/>
        </authorList>
    </citation>
    <scope>NUCLEOTIDE SEQUENCE [LARGE SCALE GENOMIC DNA]</scope>
    <source>
        <strain>cv. Nipponbare</strain>
    </source>
</reference>
<reference key="2">
    <citation type="journal article" date="2005" name="Nature">
        <title>The map-based sequence of the rice genome.</title>
        <authorList>
            <consortium name="International rice genome sequencing project (IRGSP)"/>
        </authorList>
    </citation>
    <scope>NUCLEOTIDE SEQUENCE [LARGE SCALE GENOMIC DNA]</scope>
    <source>
        <strain>cv. Nipponbare</strain>
    </source>
</reference>
<reference key="3">
    <citation type="journal article" date="2008" name="Nucleic Acids Res.">
        <title>The rice annotation project database (RAP-DB): 2008 update.</title>
        <authorList>
            <consortium name="The rice annotation project (RAP)"/>
        </authorList>
    </citation>
    <scope>GENOME REANNOTATION</scope>
    <source>
        <strain>cv. Nipponbare</strain>
    </source>
</reference>
<reference key="4">
    <citation type="journal article" date="2013" name="Rice">
        <title>Improvement of the Oryza sativa Nipponbare reference genome using next generation sequence and optical map data.</title>
        <authorList>
            <person name="Kawahara Y."/>
            <person name="de la Bastide M."/>
            <person name="Hamilton J.P."/>
            <person name="Kanamori H."/>
            <person name="McCombie W.R."/>
            <person name="Ouyang S."/>
            <person name="Schwartz D.C."/>
            <person name="Tanaka T."/>
            <person name="Wu J."/>
            <person name="Zhou S."/>
            <person name="Childs K.L."/>
            <person name="Davidson R.M."/>
            <person name="Lin H."/>
            <person name="Quesada-Ocampo L."/>
            <person name="Vaillancourt B."/>
            <person name="Sakai H."/>
            <person name="Lee S.S."/>
            <person name="Kim J."/>
            <person name="Numa H."/>
            <person name="Itoh T."/>
            <person name="Buell C.R."/>
            <person name="Matsumoto T."/>
        </authorList>
    </citation>
    <scope>GENOME REANNOTATION</scope>
    <source>
        <strain>cv. Nipponbare</strain>
    </source>
</reference>
<reference key="5">
    <citation type="journal article" date="2003" name="Science">
        <title>Collection, mapping, and annotation of over 28,000 cDNA clones from japonica rice.</title>
        <authorList>
            <consortium name="The rice full-length cDNA consortium"/>
        </authorList>
    </citation>
    <scope>NUCLEOTIDE SEQUENCE [LARGE SCALE MRNA] (ISOFORM 2)</scope>
    <source>
        <strain>cv. Nipponbare</strain>
    </source>
</reference>
<reference key="6">
    <citation type="journal article" date="2011" name="Mol. Plant">
        <title>The rice RMR1 associates with a distinct prevacuolar compartment for the protein storage vacuole pathway.</title>
        <authorList>
            <person name="Shen Y."/>
            <person name="Wang J."/>
            <person name="Ding Y."/>
            <person name="Lo S.W."/>
            <person name="Gouzerh G."/>
            <person name="Neuhaus J.M."/>
            <person name="Jiang L."/>
        </authorList>
    </citation>
    <scope>FUNCTION</scope>
    <scope>SUBCELLULAR LOCATION</scope>
</reference>
<accession>Q10R93</accession>
<accession>Q10R92</accession>
<accession>Q8S7T8</accession>
<evidence type="ECO:0000255" key="1"/>
<evidence type="ECO:0000255" key="2">
    <source>
        <dbReference type="PROSITE-ProRule" id="PRU00175"/>
    </source>
</evidence>
<evidence type="ECO:0000256" key="3">
    <source>
        <dbReference type="SAM" id="MobiDB-lite"/>
    </source>
</evidence>
<evidence type="ECO:0000269" key="4">
    <source>
    </source>
</evidence>
<evidence type="ECO:0000303" key="5">
    <source>
    </source>
</evidence>
<evidence type="ECO:0000305" key="6"/>
<evidence type="ECO:0000305" key="7">
    <source>
    </source>
</evidence>
<keyword id="KW-0025">Alternative splicing</keyword>
<keyword id="KW-1015">Disulfide bond</keyword>
<keyword id="KW-0325">Glycoprotein</keyword>
<keyword id="KW-0333">Golgi apparatus</keyword>
<keyword id="KW-0472">Membrane</keyword>
<keyword id="KW-0479">Metal-binding</keyword>
<keyword id="KW-0653">Protein transport</keyword>
<keyword id="KW-1185">Reference proteome</keyword>
<keyword id="KW-0732">Signal</keyword>
<keyword id="KW-0812">Transmembrane</keyword>
<keyword id="KW-1133">Transmembrane helix</keyword>
<keyword id="KW-0813">Transport</keyword>
<keyword id="KW-0926">Vacuole</keyword>
<keyword id="KW-0862">Zinc</keyword>
<keyword id="KW-0863">Zinc-finger</keyword>
<sequence length="533" mass="57168">MNRRRTMLLLICLCATFCLMTQLGAANVVLMGTNLTLSFDDVEASFAPGVKGSGFEGVVYTAEPLDACSPLTSKAEKGPPSPFALIIRGGCTFDEKVKNAQDAGFKAAIVYDNENSGVLISMAGSSGGIHIYAVFISKASGEVLKKFSGHTDVEVWILPAFENSAWSIMAISFISLLAMSAVLATCFFVRRHHIRRDRPRIPEAREFHGMSSQLVKAMPSLIFTKVQEDNCTSSMCAICLEDYNVGEKLRVLPCRHKFHAACVDLWLTTWRTFCPVCKRDASTGIPDPPASETTPLLSSAVRLPSQSSSFRSSVAASPPRPISRRPSSQSISRIYAASGTPNSPNPIRSFTNSTAMSISRSNVDLSNMSSRPRASHLASAHSLVGSHLSPPINIRYASPHMSHSGYASPSPHVSSSYVSNSGYGSSSYYLGSSSQHRSYLRRCGESGPSLSTMAPQSPQQSQLRHGGESDLNLAGASSGQSFRQSYLRHCADSEVNLAGASSGQSFRQSYLRHCADSDASLSAMASAQSLPGC</sequence>
<feature type="signal peptide" evidence="1">
    <location>
        <begin position="1"/>
        <end position="26"/>
    </location>
</feature>
<feature type="chain" id="PRO_0000425114" description="Receptor homology region, transmembrane domain- and RING domain-containing protein 1">
    <location>
        <begin position="27"/>
        <end position="533"/>
    </location>
</feature>
<feature type="topological domain" description="Lumenal" evidence="1">
    <location>
        <begin position="27"/>
        <end position="167"/>
    </location>
</feature>
<feature type="transmembrane region" description="Helical" evidence="1">
    <location>
        <begin position="168"/>
        <end position="188"/>
    </location>
</feature>
<feature type="topological domain" description="Cytoplasmic" evidence="1">
    <location>
        <begin position="189"/>
        <end position="533"/>
    </location>
</feature>
<feature type="domain" description="PA">
    <location>
        <begin position="84"/>
        <end position="145"/>
    </location>
</feature>
<feature type="zinc finger region" description="RING-type; atypical" evidence="2">
    <location>
        <begin position="236"/>
        <end position="278"/>
    </location>
</feature>
<feature type="region of interest" description="Disordered" evidence="3">
    <location>
        <begin position="309"/>
        <end position="329"/>
    </location>
</feature>
<feature type="region of interest" description="Disordered" evidence="3">
    <location>
        <begin position="440"/>
        <end position="476"/>
    </location>
</feature>
<feature type="compositionally biased region" description="Polar residues" evidence="3">
    <location>
        <begin position="448"/>
        <end position="463"/>
    </location>
</feature>
<feature type="glycosylation site" description="N-linked (GlcNAc...) asparagine" evidence="1">
    <location>
        <position position="34"/>
    </location>
</feature>
<feature type="disulfide bond" evidence="1">
    <location>
        <begin position="68"/>
        <end position="91"/>
    </location>
</feature>
<feature type="splice variant" id="VSP_053580" description="In isoform 2." evidence="5">
    <original>RYASPHMSHSGYASPSPHVSSSYVSNSGYGSSSY</original>
    <variation>SY</variation>
    <location>
        <begin position="395"/>
        <end position="428"/>
    </location>
</feature>
<dbReference type="EMBL" id="AC073556">
    <property type="protein sequence ID" value="AAL84300.1"/>
    <property type="status" value="ALT_SEQ"/>
    <property type="molecule type" value="Genomic_DNA"/>
</dbReference>
<dbReference type="EMBL" id="DP000009">
    <property type="protein sequence ID" value="ABF94172.1"/>
    <property type="molecule type" value="Genomic_DNA"/>
</dbReference>
<dbReference type="EMBL" id="DP000009">
    <property type="protein sequence ID" value="ABF94173.1"/>
    <property type="molecule type" value="Genomic_DNA"/>
</dbReference>
<dbReference type="EMBL" id="AP008209">
    <property type="protein sequence ID" value="BAF10996.1"/>
    <property type="molecule type" value="Genomic_DNA"/>
</dbReference>
<dbReference type="EMBL" id="AP014959">
    <property type="protein sequence ID" value="BAS82487.1"/>
    <property type="molecule type" value="Genomic_DNA"/>
</dbReference>
<dbReference type="EMBL" id="AK070468">
    <property type="protein sequence ID" value="BAG91973.1"/>
    <property type="molecule type" value="mRNA"/>
</dbReference>
<dbReference type="RefSeq" id="XP_015632382.1">
    <property type="nucleotide sequence ID" value="XM_015776896.1"/>
</dbReference>
<dbReference type="RefSeq" id="XP_015632383.1">
    <property type="nucleotide sequence ID" value="XM_015776897.1"/>
</dbReference>
<dbReference type="RefSeq" id="XP_015632384.1">
    <property type="nucleotide sequence ID" value="XM_015776898.1"/>
</dbReference>
<dbReference type="SMR" id="Q10R93"/>
<dbReference type="FunCoup" id="Q10R93">
    <property type="interactions" value="1948"/>
</dbReference>
<dbReference type="STRING" id="39947.Q10R93"/>
<dbReference type="PaxDb" id="39947-Q10R93"/>
<dbReference type="EnsemblPlants" id="Os03t0167500-02">
    <molecule id="Q10R93-1"/>
    <property type="protein sequence ID" value="Os03t0167500-02"/>
    <property type="gene ID" value="Os03g0167500"/>
</dbReference>
<dbReference type="Gramene" id="Os03t0167500-02">
    <molecule id="Q10R93-1"/>
    <property type="protein sequence ID" value="Os03t0167500-02"/>
    <property type="gene ID" value="Os03g0167500"/>
</dbReference>
<dbReference type="KEGG" id="dosa:Os03g0167500"/>
<dbReference type="eggNOG" id="KOG4628">
    <property type="taxonomic scope" value="Eukaryota"/>
</dbReference>
<dbReference type="InParanoid" id="Q10R93"/>
<dbReference type="OMA" id="VYTIFTV"/>
<dbReference type="OrthoDB" id="8062037at2759"/>
<dbReference type="Proteomes" id="UP000000763">
    <property type="component" value="Chromosome 3"/>
</dbReference>
<dbReference type="Proteomes" id="UP000059680">
    <property type="component" value="Chromosome 3"/>
</dbReference>
<dbReference type="GO" id="GO:0005737">
    <property type="term" value="C:cytoplasm"/>
    <property type="evidence" value="ECO:0000318"/>
    <property type="project" value="GO_Central"/>
</dbReference>
<dbReference type="GO" id="GO:0000139">
    <property type="term" value="C:Golgi membrane"/>
    <property type="evidence" value="ECO:0007669"/>
    <property type="project" value="UniProtKB-SubCell"/>
</dbReference>
<dbReference type="GO" id="GO:0032586">
    <property type="term" value="C:protein storage vacuole membrane"/>
    <property type="evidence" value="ECO:0007669"/>
    <property type="project" value="UniProtKB-SubCell"/>
</dbReference>
<dbReference type="GO" id="GO:0061630">
    <property type="term" value="F:ubiquitin protein ligase activity"/>
    <property type="evidence" value="ECO:0000318"/>
    <property type="project" value="GO_Central"/>
</dbReference>
<dbReference type="GO" id="GO:0008270">
    <property type="term" value="F:zinc ion binding"/>
    <property type="evidence" value="ECO:0007669"/>
    <property type="project" value="UniProtKB-KW"/>
</dbReference>
<dbReference type="GO" id="GO:0015031">
    <property type="term" value="P:protein transport"/>
    <property type="evidence" value="ECO:0007669"/>
    <property type="project" value="UniProtKB-KW"/>
</dbReference>
<dbReference type="GO" id="GO:0006511">
    <property type="term" value="P:ubiquitin-dependent protein catabolic process"/>
    <property type="evidence" value="ECO:0000318"/>
    <property type="project" value="GO_Central"/>
</dbReference>
<dbReference type="CDD" id="cd02123">
    <property type="entry name" value="PA_C_RZF_like"/>
    <property type="match status" value="1"/>
</dbReference>
<dbReference type="FunFam" id="3.30.40.10:FF:000276">
    <property type="entry name" value="Receptor homology region transmembrane domain-and RING domain-containing protein 2"/>
    <property type="match status" value="1"/>
</dbReference>
<dbReference type="FunFam" id="3.50.30.30:FF:000020">
    <property type="entry name" value="Receptor homology region transmembrane domain-and RING domain-containing protein 2"/>
    <property type="match status" value="1"/>
</dbReference>
<dbReference type="Gene3D" id="3.50.30.30">
    <property type="match status" value="1"/>
</dbReference>
<dbReference type="Gene3D" id="3.30.40.10">
    <property type="entry name" value="Zinc/RING finger domain, C3HC4 (zinc finger)"/>
    <property type="match status" value="1"/>
</dbReference>
<dbReference type="InterPro" id="IPR051653">
    <property type="entry name" value="E3_ligase_sorting_rcpt"/>
</dbReference>
<dbReference type="InterPro" id="IPR046450">
    <property type="entry name" value="PA_dom_sf"/>
</dbReference>
<dbReference type="InterPro" id="IPR003137">
    <property type="entry name" value="PA_domain"/>
</dbReference>
<dbReference type="InterPro" id="IPR001841">
    <property type="entry name" value="Znf_RING"/>
</dbReference>
<dbReference type="InterPro" id="IPR013083">
    <property type="entry name" value="Znf_RING/FYVE/PHD"/>
</dbReference>
<dbReference type="InterPro" id="IPR044744">
    <property type="entry name" value="ZNRF4/RNF13/RNF167_PA"/>
</dbReference>
<dbReference type="PANTHER" id="PTHR47168">
    <property type="entry name" value="RING ZINC FINGER DOMAIN SUPERFAMILY PROTEIN-RELATED"/>
    <property type="match status" value="1"/>
</dbReference>
<dbReference type="PANTHER" id="PTHR47168:SF5">
    <property type="entry name" value="RING-TYPE DOMAIN-CONTAINING PROTEIN"/>
    <property type="match status" value="1"/>
</dbReference>
<dbReference type="Pfam" id="PF02225">
    <property type="entry name" value="PA"/>
    <property type="match status" value="1"/>
</dbReference>
<dbReference type="Pfam" id="PF13639">
    <property type="entry name" value="zf-RING_2"/>
    <property type="match status" value="1"/>
</dbReference>
<dbReference type="SMART" id="SM00184">
    <property type="entry name" value="RING"/>
    <property type="match status" value="1"/>
</dbReference>
<dbReference type="SUPFAM" id="SSF52025">
    <property type="entry name" value="PA domain"/>
    <property type="match status" value="1"/>
</dbReference>
<dbReference type="SUPFAM" id="SSF57850">
    <property type="entry name" value="RING/U-box"/>
    <property type="match status" value="1"/>
</dbReference>
<dbReference type="PROSITE" id="PS50089">
    <property type="entry name" value="ZF_RING_2"/>
    <property type="match status" value="1"/>
</dbReference>